<organism>
    <name type="scientific">Rattus norvegicus</name>
    <name type="common">Rat</name>
    <dbReference type="NCBI Taxonomy" id="10116"/>
    <lineage>
        <taxon>Eukaryota</taxon>
        <taxon>Metazoa</taxon>
        <taxon>Chordata</taxon>
        <taxon>Craniata</taxon>
        <taxon>Vertebrata</taxon>
        <taxon>Euteleostomi</taxon>
        <taxon>Mammalia</taxon>
        <taxon>Eutheria</taxon>
        <taxon>Euarchontoglires</taxon>
        <taxon>Glires</taxon>
        <taxon>Rodentia</taxon>
        <taxon>Myomorpha</taxon>
        <taxon>Muroidea</taxon>
        <taxon>Muridae</taxon>
        <taxon>Murinae</taxon>
        <taxon>Rattus</taxon>
    </lineage>
</organism>
<proteinExistence type="evidence at transcript level"/>
<sequence>MELKRLSISWQFLIVLVLILQSLSALDFDPYRVLGVSRTASQADIKKAYKKLAREWHPDKNKDPGAEDKFIQISKAYEILSNEEKRTNYDHYGDAGENQGYQQQREYRFRHFHENFYFDESFFHFPFNSERRDSIDEKYLLHFSHYVNEVVPDSFKKPYLIKITSDWCFSCIHIEPIWKEVVQELEGLGVGIGVVHAGYERRLAHHLGAHSTPSILGIINGKISFFHNAVVHENLRQFVESLLPGNLVEKVTNKNYVRFLSGWQQENKPHALLFGQTPAAPLLYKLTAFAYKDYVSFGYVYVGLRGVEEMTRQYNVNIYAPTMLIFKEHINKPADAIQARGLKKQVIEDFITQNKYLLASRLTSQKLFHELCPVKRSHRQRKYCVVLLTAEANKLSKPFDAFLSFALANTQDTVRFVHVYSSRQQEFASTLLPDIEAFQGKSGVSILERRNTAGRVVFKTLEDPWTGSESDKFVLLGYLDQLRKDPAFLSSEAVLPDLTDELAPVFLLRWLYSVSDYLSDFWESLLHSNWREMMPLLSLIFSALFILFGTVIVQAFSDSNEERESHPPDKEEVPEKAGKTEPSFTKESSSKIPKKGFVEVTELTDVTYTSNLVRLRPGHMNVVLILSNSTKTSLLQKFALEVYTFTGSSSLHFSFLTLDKHREWLEYLLEFAQDAAPIPNQYDKHFMERDYTGYVLALNGHKKYFCLFKPLKTVDEETVGSCDLDSSRGKPPCGLGPKPLKGKLSKLSLWMERLLEGSLQRFYIPSWPELD</sequence>
<reference key="1">
    <citation type="journal article" date="2004" name="Genome Res.">
        <title>The status, quality, and expansion of the NIH full-length cDNA project: the Mammalian Gene Collection (MGC).</title>
        <authorList>
            <consortium name="The MGC Project Team"/>
        </authorList>
    </citation>
    <scope>NUCLEOTIDE SEQUENCE [LARGE SCALE MRNA]</scope>
    <source>
        <tissue>Liver</tissue>
    </source>
</reference>
<name>DJC16_RAT</name>
<keyword id="KW-0072">Autophagy</keyword>
<keyword id="KW-0256">Endoplasmic reticulum</keyword>
<keyword id="KW-0325">Glycoprotein</keyword>
<keyword id="KW-0472">Membrane</keyword>
<keyword id="KW-1185">Reference proteome</keyword>
<keyword id="KW-0732">Signal</keyword>
<keyword id="KW-0812">Transmembrane</keyword>
<keyword id="KW-1133">Transmembrane helix</keyword>
<dbReference type="EMBL" id="BC089875">
    <property type="protein sequence ID" value="AAH89875.1"/>
    <property type="molecule type" value="mRNA"/>
</dbReference>
<dbReference type="RefSeq" id="NP_001014216.1">
    <property type="nucleotide sequence ID" value="NM_001014194.1"/>
</dbReference>
<dbReference type="SMR" id="Q5FVM7"/>
<dbReference type="FunCoup" id="Q5FVM7">
    <property type="interactions" value="4027"/>
</dbReference>
<dbReference type="STRING" id="10116.ENSRNOP00000017247"/>
<dbReference type="GlyCosmos" id="Q5FVM7">
    <property type="glycosylation" value="1 site, No reported glycans"/>
</dbReference>
<dbReference type="GlyGen" id="Q5FVM7">
    <property type="glycosylation" value="1 site"/>
</dbReference>
<dbReference type="PhosphoSitePlus" id="Q5FVM7"/>
<dbReference type="PaxDb" id="10116-ENSRNOP00000017247"/>
<dbReference type="Ensembl" id="ENSRNOT00000017247.5">
    <property type="protein sequence ID" value="ENSRNOP00000017247.3"/>
    <property type="gene ID" value="ENSRNOG00000012503.5"/>
</dbReference>
<dbReference type="GeneID" id="362652"/>
<dbReference type="KEGG" id="rno:362652"/>
<dbReference type="UCSC" id="RGD:1359395">
    <property type="organism name" value="rat"/>
</dbReference>
<dbReference type="AGR" id="RGD:1359395"/>
<dbReference type="CTD" id="23341"/>
<dbReference type="RGD" id="1359395">
    <property type="gene designation" value="Dnajc16"/>
</dbReference>
<dbReference type="eggNOG" id="KOG0715">
    <property type="taxonomic scope" value="Eukaryota"/>
</dbReference>
<dbReference type="GeneTree" id="ENSGT00940000155851"/>
<dbReference type="HOGENOM" id="CLU_020140_0_1_1"/>
<dbReference type="InParanoid" id="Q5FVM7"/>
<dbReference type="OMA" id="QPEFAST"/>
<dbReference type="OrthoDB" id="10065037at2759"/>
<dbReference type="PhylomeDB" id="Q5FVM7"/>
<dbReference type="TreeFam" id="TF312804"/>
<dbReference type="PRO" id="PR:Q5FVM7"/>
<dbReference type="Proteomes" id="UP000002494">
    <property type="component" value="Chromosome 5"/>
</dbReference>
<dbReference type="Bgee" id="ENSRNOG00000012503">
    <property type="expression patterns" value="Expressed in skeletal muscle tissue and 18 other cell types or tissues"/>
</dbReference>
<dbReference type="GO" id="GO:0005789">
    <property type="term" value="C:endoplasmic reticulum membrane"/>
    <property type="evidence" value="ECO:0000250"/>
    <property type="project" value="UniProtKB"/>
</dbReference>
<dbReference type="GO" id="GO:0016243">
    <property type="term" value="P:regulation of autophagosome size"/>
    <property type="evidence" value="ECO:0000250"/>
    <property type="project" value="UniProtKB"/>
</dbReference>
<dbReference type="CDD" id="cd06257">
    <property type="entry name" value="DnaJ"/>
    <property type="match status" value="1"/>
</dbReference>
<dbReference type="CDD" id="cd02963">
    <property type="entry name" value="TRX_DnaJ"/>
    <property type="match status" value="1"/>
</dbReference>
<dbReference type="Gene3D" id="1.10.287.110">
    <property type="entry name" value="DnaJ domain"/>
    <property type="match status" value="1"/>
</dbReference>
<dbReference type="Gene3D" id="3.40.30.10">
    <property type="entry name" value="Glutaredoxin"/>
    <property type="match status" value="1"/>
</dbReference>
<dbReference type="InterPro" id="IPR052448">
    <property type="entry name" value="DnaJ_C16_autophagy_reg"/>
</dbReference>
<dbReference type="InterPro" id="IPR001623">
    <property type="entry name" value="DnaJ_domain"/>
</dbReference>
<dbReference type="InterPro" id="IPR018253">
    <property type="entry name" value="DnaJ_domain_CS"/>
</dbReference>
<dbReference type="InterPro" id="IPR043361">
    <property type="entry name" value="DNAJC16_TRX"/>
</dbReference>
<dbReference type="InterPro" id="IPR036869">
    <property type="entry name" value="J_dom_sf"/>
</dbReference>
<dbReference type="InterPro" id="IPR036249">
    <property type="entry name" value="Thioredoxin-like_sf"/>
</dbReference>
<dbReference type="InterPro" id="IPR013766">
    <property type="entry name" value="Thioredoxin_domain"/>
</dbReference>
<dbReference type="PANTHER" id="PTHR44303">
    <property type="entry name" value="DNAJ HOMOLOG SUBFAMILY C MEMBER 16"/>
    <property type="match status" value="1"/>
</dbReference>
<dbReference type="PANTHER" id="PTHR44303:SF2">
    <property type="entry name" value="DNAJ HOMOLOG SUBFAMILY C MEMBER 16"/>
    <property type="match status" value="1"/>
</dbReference>
<dbReference type="Pfam" id="PF00226">
    <property type="entry name" value="DnaJ"/>
    <property type="match status" value="1"/>
</dbReference>
<dbReference type="Pfam" id="PF00085">
    <property type="entry name" value="Thioredoxin"/>
    <property type="match status" value="1"/>
</dbReference>
<dbReference type="PRINTS" id="PR00625">
    <property type="entry name" value="JDOMAIN"/>
</dbReference>
<dbReference type="SMART" id="SM00271">
    <property type="entry name" value="DnaJ"/>
    <property type="match status" value="1"/>
</dbReference>
<dbReference type="SUPFAM" id="SSF46565">
    <property type="entry name" value="Chaperone J-domain"/>
    <property type="match status" value="1"/>
</dbReference>
<dbReference type="SUPFAM" id="SSF52833">
    <property type="entry name" value="Thioredoxin-like"/>
    <property type="match status" value="1"/>
</dbReference>
<dbReference type="PROSITE" id="PS00636">
    <property type="entry name" value="DNAJ_1"/>
    <property type="match status" value="1"/>
</dbReference>
<dbReference type="PROSITE" id="PS50076">
    <property type="entry name" value="DNAJ_2"/>
    <property type="match status" value="1"/>
</dbReference>
<dbReference type="PROSITE" id="PS51352">
    <property type="entry name" value="THIOREDOXIN_2"/>
    <property type="match status" value="1"/>
</dbReference>
<comment type="function">
    <text evidence="1">Plays an important role in regulating the size of autophagosomes during the formation process.</text>
</comment>
<comment type="subcellular location">
    <subcellularLocation>
        <location evidence="1">Endoplasmic reticulum membrane</location>
        <topology evidence="6">Single-pass type IV membrane protein</topology>
    </subcellularLocation>
</comment>
<evidence type="ECO:0000250" key="1">
    <source>
        <dbReference type="UniProtKB" id="Q9Y2G8"/>
    </source>
</evidence>
<evidence type="ECO:0000255" key="2"/>
<evidence type="ECO:0000255" key="3">
    <source>
        <dbReference type="PROSITE-ProRule" id="PRU00286"/>
    </source>
</evidence>
<evidence type="ECO:0000255" key="4">
    <source>
        <dbReference type="PROSITE-ProRule" id="PRU00691"/>
    </source>
</evidence>
<evidence type="ECO:0000256" key="5">
    <source>
        <dbReference type="SAM" id="MobiDB-lite"/>
    </source>
</evidence>
<evidence type="ECO:0000305" key="6"/>
<accession>Q5FVM7</accession>
<protein>
    <recommendedName>
        <fullName>DnaJ homolog subfamily C member 16</fullName>
    </recommendedName>
    <alternativeName>
        <fullName evidence="1">Endoplasmic reticulum DNA J domain-containing protein 8</fullName>
        <shortName>ER-resident protein ERdj8</shortName>
        <shortName>ERdj8</shortName>
    </alternativeName>
</protein>
<gene>
    <name type="primary">Dnajc16</name>
    <name type="synonym">Erdj8</name>
</gene>
<feature type="signal peptide" evidence="2">
    <location>
        <begin position="1"/>
        <end position="25"/>
    </location>
</feature>
<feature type="chain" id="PRO_0000236686" description="DnaJ homolog subfamily C member 16">
    <location>
        <begin position="26"/>
        <end position="771"/>
    </location>
</feature>
<feature type="topological domain" description="Cytoplasmic" evidence="2">
    <location>
        <begin position="26"/>
        <end position="532"/>
    </location>
</feature>
<feature type="transmembrane region" description="Helical; Anchor for type IV membrane protein" evidence="2">
    <location>
        <begin position="533"/>
        <end position="553"/>
    </location>
</feature>
<feature type="topological domain" description="Extracellular" evidence="2">
    <location>
        <begin position="554"/>
        <end position="771"/>
    </location>
</feature>
<feature type="domain" description="J" evidence="3">
    <location>
        <begin position="29"/>
        <end position="93"/>
    </location>
</feature>
<feature type="domain" description="Thioredoxin" evidence="4">
    <location>
        <begin position="116"/>
        <end position="244"/>
    </location>
</feature>
<feature type="region of interest" description="Disordered" evidence="5">
    <location>
        <begin position="559"/>
        <end position="590"/>
    </location>
</feature>
<feature type="compositionally biased region" description="Basic and acidic residues" evidence="5">
    <location>
        <begin position="560"/>
        <end position="579"/>
    </location>
</feature>
<feature type="glycosylation site" description="N-linked (GlcNAc...) asparagine" evidence="2">
    <location>
        <position position="628"/>
    </location>
</feature>